<organism>
    <name type="scientific">Escherichia coli</name>
    <dbReference type="NCBI Taxonomy" id="562"/>
    <lineage>
        <taxon>Bacteria</taxon>
        <taxon>Pseudomonadati</taxon>
        <taxon>Pseudomonadota</taxon>
        <taxon>Gammaproteobacteria</taxon>
        <taxon>Enterobacterales</taxon>
        <taxon>Enterobacteriaceae</taxon>
        <taxon>Escherichia</taxon>
    </lineage>
</organism>
<reference key="1">
    <citation type="submission" date="1994-01" db="EMBL/GenBank/DDBJ databases">
        <title>Nucleotide sequence of traN gene of IncP plasmid RP4.</title>
        <authorList>
            <person name="Schilf W."/>
            <person name="Lanka E."/>
        </authorList>
    </citation>
    <scope>NUCLEOTIDE SEQUENCE [GENOMIC DNA]</scope>
</reference>
<accession>Q60216</accession>
<sequence>MSSYSRAERAPWGDFPKVVRNGDLGSLTNEPEYQAAKQGDAEAALNLVERLISDDTVAQLKTLIGDDKPRIVPVLAVEAAGNNKIPAMMAVVLADRLGLEVETDIVQREKVARTGAGSDHRLAFNPTFEGEVIPGQKYIVVDDTLTMGGTIASLRGYIENNGGKVMAASVMTAHEGALDLAVKPKMLAGINEKHGPAMDAFWKETFGYGIDRLTQGEAGHLRAAPSVDAIRDRIAAARNEAVNRVGASRTATTARAGQQQSPAVKQSSGNSGEDLLQAAQEAETEQQALLESAPIEQTYQQTLALYVQAKHDQVERIEDRLEQLVDRQQARLQQLQSNAPGLLSLPRTKAAWQQQQAQQQARLQTLHTRLDMVREIKEGMGIHAPKIEELATRKMRADDPELAGDWDSMREAARRHQALMRKQEQEKKQAQERERGRSQSLGLSNKPS</sequence>
<gene>
    <name type="primary">traN</name>
</gene>
<comment type="similarity">
    <text evidence="2">To H.influenzae HI_1407.</text>
</comment>
<protein>
    <recommendedName>
        <fullName>Protein TraN</fullName>
    </recommendedName>
</protein>
<keyword id="KW-0614">Plasmid</keyword>
<evidence type="ECO:0000256" key="1">
    <source>
        <dbReference type="SAM" id="MobiDB-lite"/>
    </source>
</evidence>
<evidence type="ECO:0000305" key="2"/>
<proteinExistence type="predicted"/>
<name>TRAN4_ECOLX</name>
<geneLocation type="plasmid">
    <name>IncP-alpha RP4</name>
</geneLocation>
<feature type="chain" id="PRO_0000068604" description="Protein TraN">
    <location>
        <begin position="1"/>
        <end position="448"/>
    </location>
</feature>
<feature type="region of interest" description="Disordered" evidence="1">
    <location>
        <begin position="243"/>
        <end position="273"/>
    </location>
</feature>
<feature type="region of interest" description="Disordered" evidence="1">
    <location>
        <begin position="411"/>
        <end position="448"/>
    </location>
</feature>
<feature type="compositionally biased region" description="Low complexity" evidence="1">
    <location>
        <begin position="246"/>
        <end position="261"/>
    </location>
</feature>
<feature type="compositionally biased region" description="Polar residues" evidence="1">
    <location>
        <begin position="262"/>
        <end position="271"/>
    </location>
</feature>
<feature type="compositionally biased region" description="Basic and acidic residues" evidence="1">
    <location>
        <begin position="421"/>
        <end position="437"/>
    </location>
</feature>
<feature type="compositionally biased region" description="Polar residues" evidence="1">
    <location>
        <begin position="438"/>
        <end position="448"/>
    </location>
</feature>
<dbReference type="EMBL" id="L10330">
    <property type="protein sequence ID" value="AAA26424.1"/>
    <property type="molecule type" value="Genomic_DNA"/>
</dbReference>
<dbReference type="SMR" id="Q60216"/>
<dbReference type="CDD" id="cd06223">
    <property type="entry name" value="PRTases_typeI"/>
    <property type="match status" value="1"/>
</dbReference>
<dbReference type="Gene3D" id="3.40.50.2020">
    <property type="match status" value="1"/>
</dbReference>
<dbReference type="InterPro" id="IPR050043">
    <property type="entry name" value="KfrC-like_dom"/>
</dbReference>
<dbReference type="InterPro" id="IPR000836">
    <property type="entry name" value="PRibTrfase_dom"/>
</dbReference>
<dbReference type="InterPro" id="IPR029057">
    <property type="entry name" value="PRTase-like"/>
</dbReference>
<dbReference type="NCBIfam" id="NF042916">
    <property type="entry name" value="IncP_KfrC_dom"/>
    <property type="match status" value="1"/>
</dbReference>
<dbReference type="SUPFAM" id="SSF53271">
    <property type="entry name" value="PRTase-like"/>
    <property type="match status" value="1"/>
</dbReference>